<accession>A1VYJ3</accession>
<keyword id="KW-0687">Ribonucleoprotein</keyword>
<keyword id="KW-0689">Ribosomal protein</keyword>
<name>RL7_CAMJJ</name>
<organism>
    <name type="scientific">Campylobacter jejuni subsp. jejuni serotype O:23/36 (strain 81-176)</name>
    <dbReference type="NCBI Taxonomy" id="354242"/>
    <lineage>
        <taxon>Bacteria</taxon>
        <taxon>Pseudomonadati</taxon>
        <taxon>Campylobacterota</taxon>
        <taxon>Epsilonproteobacteria</taxon>
        <taxon>Campylobacterales</taxon>
        <taxon>Campylobacteraceae</taxon>
        <taxon>Campylobacter</taxon>
    </lineage>
</organism>
<feature type="chain" id="PRO_1000006983" description="Large ribosomal subunit protein bL12">
    <location>
        <begin position="1"/>
        <end position="125"/>
    </location>
</feature>
<evidence type="ECO:0000255" key="1">
    <source>
        <dbReference type="HAMAP-Rule" id="MF_00368"/>
    </source>
</evidence>
<evidence type="ECO:0000305" key="2"/>
<protein>
    <recommendedName>
        <fullName evidence="1">Large ribosomal subunit protein bL12</fullName>
    </recommendedName>
    <alternativeName>
        <fullName evidence="2">50S ribosomal protein L7/L12</fullName>
    </alternativeName>
</protein>
<sequence>MAISKEDVLEYISNLSVLELSELVKEFEEKFGVSAAPVMVAGGAAAGGAAAAAEEKTEFDIVLTDGGAKKIEVIKIVRALTGLGLKEAKDAVEQTPSTLKEGVAKAEAEEAKKQLEEAGAKVELK</sequence>
<dbReference type="EMBL" id="CP000538">
    <property type="protein sequence ID" value="EAQ72965.1"/>
    <property type="molecule type" value="Genomic_DNA"/>
</dbReference>
<dbReference type="RefSeq" id="WP_002854820.1">
    <property type="nucleotide sequence ID" value="NC_008787.1"/>
</dbReference>
<dbReference type="SMR" id="A1VYJ3"/>
<dbReference type="KEGG" id="cjj:CJJ81176_0508"/>
<dbReference type="eggNOG" id="COG0222">
    <property type="taxonomic scope" value="Bacteria"/>
</dbReference>
<dbReference type="HOGENOM" id="CLU_086499_3_0_7"/>
<dbReference type="Proteomes" id="UP000000646">
    <property type="component" value="Chromosome"/>
</dbReference>
<dbReference type="GO" id="GO:0022625">
    <property type="term" value="C:cytosolic large ribosomal subunit"/>
    <property type="evidence" value="ECO:0007669"/>
    <property type="project" value="TreeGrafter"/>
</dbReference>
<dbReference type="GO" id="GO:0003729">
    <property type="term" value="F:mRNA binding"/>
    <property type="evidence" value="ECO:0007669"/>
    <property type="project" value="TreeGrafter"/>
</dbReference>
<dbReference type="GO" id="GO:0003735">
    <property type="term" value="F:structural constituent of ribosome"/>
    <property type="evidence" value="ECO:0007669"/>
    <property type="project" value="InterPro"/>
</dbReference>
<dbReference type="GO" id="GO:0006412">
    <property type="term" value="P:translation"/>
    <property type="evidence" value="ECO:0007669"/>
    <property type="project" value="UniProtKB-UniRule"/>
</dbReference>
<dbReference type="CDD" id="cd00387">
    <property type="entry name" value="Ribosomal_L7_L12"/>
    <property type="match status" value="1"/>
</dbReference>
<dbReference type="FunFam" id="3.30.1390.10:FF:000001">
    <property type="entry name" value="50S ribosomal protein L7/L12"/>
    <property type="match status" value="1"/>
</dbReference>
<dbReference type="Gene3D" id="3.30.1390.10">
    <property type="match status" value="1"/>
</dbReference>
<dbReference type="Gene3D" id="1.20.5.710">
    <property type="entry name" value="Single helix bin"/>
    <property type="match status" value="1"/>
</dbReference>
<dbReference type="HAMAP" id="MF_00368">
    <property type="entry name" value="Ribosomal_bL12"/>
    <property type="match status" value="1"/>
</dbReference>
<dbReference type="InterPro" id="IPR000206">
    <property type="entry name" value="Ribosomal_bL12"/>
</dbReference>
<dbReference type="InterPro" id="IPR013823">
    <property type="entry name" value="Ribosomal_bL12_C"/>
</dbReference>
<dbReference type="InterPro" id="IPR014719">
    <property type="entry name" value="Ribosomal_bL12_C/ClpS-like"/>
</dbReference>
<dbReference type="InterPro" id="IPR008932">
    <property type="entry name" value="Ribosomal_bL12_oligo"/>
</dbReference>
<dbReference type="InterPro" id="IPR036235">
    <property type="entry name" value="Ribosomal_bL12_oligo_N_sf"/>
</dbReference>
<dbReference type="NCBIfam" id="TIGR00855">
    <property type="entry name" value="L12"/>
    <property type="match status" value="1"/>
</dbReference>
<dbReference type="PANTHER" id="PTHR45987">
    <property type="entry name" value="39S RIBOSOMAL PROTEIN L12"/>
    <property type="match status" value="1"/>
</dbReference>
<dbReference type="PANTHER" id="PTHR45987:SF4">
    <property type="entry name" value="LARGE RIBOSOMAL SUBUNIT PROTEIN BL12M"/>
    <property type="match status" value="1"/>
</dbReference>
<dbReference type="Pfam" id="PF00542">
    <property type="entry name" value="Ribosomal_L12"/>
    <property type="match status" value="1"/>
</dbReference>
<dbReference type="Pfam" id="PF16320">
    <property type="entry name" value="Ribosomal_L12_N"/>
    <property type="match status" value="1"/>
</dbReference>
<dbReference type="SUPFAM" id="SSF54736">
    <property type="entry name" value="ClpS-like"/>
    <property type="match status" value="1"/>
</dbReference>
<dbReference type="SUPFAM" id="SSF48300">
    <property type="entry name" value="Ribosomal protein L7/12, oligomerisation (N-terminal) domain"/>
    <property type="match status" value="1"/>
</dbReference>
<gene>
    <name evidence="1" type="primary">rplL</name>
    <name type="ordered locus">CJJ81176_0508</name>
</gene>
<proteinExistence type="inferred from homology"/>
<reference key="1">
    <citation type="submission" date="2006-12" db="EMBL/GenBank/DDBJ databases">
        <authorList>
            <person name="Fouts D.E."/>
            <person name="Nelson K.E."/>
            <person name="Sebastian Y."/>
        </authorList>
    </citation>
    <scope>NUCLEOTIDE SEQUENCE [LARGE SCALE GENOMIC DNA]</scope>
    <source>
        <strain>81-176</strain>
    </source>
</reference>
<comment type="function">
    <text evidence="1">Forms part of the ribosomal stalk which helps the ribosome interact with GTP-bound translation factors. Is thus essential for accurate translation.</text>
</comment>
<comment type="subunit">
    <text evidence="1">Homodimer. Part of the ribosomal stalk of the 50S ribosomal subunit. Forms a multimeric L10(L12)X complex, where L10 forms an elongated spine to which 2 to 4 L12 dimers bind in a sequential fashion. Binds GTP-bound translation factors.</text>
</comment>
<comment type="similarity">
    <text evidence="1">Belongs to the bacterial ribosomal protein bL12 family.</text>
</comment>